<gene>
    <name evidence="1" type="primary">rpl39e</name>
    <name type="ordered locus">Cmaq_0202</name>
</gene>
<dbReference type="EMBL" id="CP000852">
    <property type="protein sequence ID" value="ABW01051.1"/>
    <property type="molecule type" value="Genomic_DNA"/>
</dbReference>
<dbReference type="RefSeq" id="WP_012185271.1">
    <property type="nucleotide sequence ID" value="NC_009954.1"/>
</dbReference>
<dbReference type="SMR" id="A8MAL5"/>
<dbReference type="STRING" id="397948.Cmaq_0202"/>
<dbReference type="GeneID" id="5709735"/>
<dbReference type="KEGG" id="cma:Cmaq_0202"/>
<dbReference type="eggNOG" id="arCOG04177">
    <property type="taxonomic scope" value="Archaea"/>
</dbReference>
<dbReference type="HOGENOM" id="CLU_181948_3_0_2"/>
<dbReference type="OrthoDB" id="65887at2157"/>
<dbReference type="Proteomes" id="UP000001137">
    <property type="component" value="Chromosome"/>
</dbReference>
<dbReference type="GO" id="GO:0022625">
    <property type="term" value="C:cytosolic large ribosomal subunit"/>
    <property type="evidence" value="ECO:0007669"/>
    <property type="project" value="TreeGrafter"/>
</dbReference>
<dbReference type="GO" id="GO:0003735">
    <property type="term" value="F:structural constituent of ribosome"/>
    <property type="evidence" value="ECO:0007669"/>
    <property type="project" value="InterPro"/>
</dbReference>
<dbReference type="GO" id="GO:0006412">
    <property type="term" value="P:translation"/>
    <property type="evidence" value="ECO:0007669"/>
    <property type="project" value="UniProtKB-UniRule"/>
</dbReference>
<dbReference type="FunFam" id="1.10.1620.10:FF:000001">
    <property type="entry name" value="60S ribosomal protein-like L39"/>
    <property type="match status" value="1"/>
</dbReference>
<dbReference type="Gene3D" id="1.10.1620.10">
    <property type="entry name" value="Ribosomal protein L39e"/>
    <property type="match status" value="1"/>
</dbReference>
<dbReference type="HAMAP" id="MF_00629">
    <property type="entry name" value="Ribosomal_eL39"/>
    <property type="match status" value="1"/>
</dbReference>
<dbReference type="InterPro" id="IPR000077">
    <property type="entry name" value="Ribosomal_eL39"/>
</dbReference>
<dbReference type="InterPro" id="IPR020083">
    <property type="entry name" value="Ribosomal_eL39_CS"/>
</dbReference>
<dbReference type="InterPro" id="IPR023626">
    <property type="entry name" value="Ribosomal_eL39_dom_sf"/>
</dbReference>
<dbReference type="NCBIfam" id="NF002316">
    <property type="entry name" value="PRK01242.1"/>
    <property type="match status" value="1"/>
</dbReference>
<dbReference type="PANTHER" id="PTHR19970:SF0">
    <property type="entry name" value="LARGE RIBOSOMAL SUBUNIT PROTEIN EL39"/>
    <property type="match status" value="1"/>
</dbReference>
<dbReference type="PANTHER" id="PTHR19970">
    <property type="entry name" value="RIBOSOMAL PROTEIN L39E"/>
    <property type="match status" value="1"/>
</dbReference>
<dbReference type="Pfam" id="PF00832">
    <property type="entry name" value="Ribosomal_L39"/>
    <property type="match status" value="1"/>
</dbReference>
<dbReference type="SUPFAM" id="SSF48662">
    <property type="entry name" value="Ribosomal protein L39e"/>
    <property type="match status" value="1"/>
</dbReference>
<dbReference type="PROSITE" id="PS00051">
    <property type="entry name" value="RIBOSOMAL_L39E"/>
    <property type="match status" value="1"/>
</dbReference>
<comment type="similarity">
    <text evidence="1">Belongs to the eukaryotic ribosomal protein eL39 family.</text>
</comment>
<accession>A8MAL5</accession>
<sequence length="52" mass="6078">MATHKPLGFKLRLASAGKSNRNPPAWVMVKTDRKVTYNTKRRNWRRVKLKLG</sequence>
<evidence type="ECO:0000255" key="1">
    <source>
        <dbReference type="HAMAP-Rule" id="MF_00629"/>
    </source>
</evidence>
<evidence type="ECO:0000305" key="2"/>
<keyword id="KW-1185">Reference proteome</keyword>
<keyword id="KW-0687">Ribonucleoprotein</keyword>
<keyword id="KW-0689">Ribosomal protein</keyword>
<organism>
    <name type="scientific">Caldivirga maquilingensis (strain ATCC 700844 / DSM 13496 / JCM 10307 / IC-167)</name>
    <dbReference type="NCBI Taxonomy" id="397948"/>
    <lineage>
        <taxon>Archaea</taxon>
        <taxon>Thermoproteota</taxon>
        <taxon>Thermoprotei</taxon>
        <taxon>Thermoproteales</taxon>
        <taxon>Thermoproteaceae</taxon>
        <taxon>Caldivirga</taxon>
    </lineage>
</organism>
<reference key="1">
    <citation type="submission" date="2007-10" db="EMBL/GenBank/DDBJ databases">
        <title>Complete sequence of Caldivirga maquilingensis IC-167.</title>
        <authorList>
            <consortium name="US DOE Joint Genome Institute"/>
            <person name="Copeland A."/>
            <person name="Lucas S."/>
            <person name="Lapidus A."/>
            <person name="Barry K."/>
            <person name="Glavina del Rio T."/>
            <person name="Dalin E."/>
            <person name="Tice H."/>
            <person name="Pitluck S."/>
            <person name="Saunders E."/>
            <person name="Brettin T."/>
            <person name="Bruce D."/>
            <person name="Detter J.C."/>
            <person name="Han C."/>
            <person name="Schmutz J."/>
            <person name="Larimer F."/>
            <person name="Land M."/>
            <person name="Hauser L."/>
            <person name="Kyrpides N."/>
            <person name="Ivanova N."/>
            <person name="Biddle J.F."/>
            <person name="Zhang Z."/>
            <person name="Fitz-Gibbon S.T."/>
            <person name="Lowe T.M."/>
            <person name="Saltikov C."/>
            <person name="House C.H."/>
            <person name="Richardson P."/>
        </authorList>
    </citation>
    <scope>NUCLEOTIDE SEQUENCE [LARGE SCALE GENOMIC DNA]</scope>
    <source>
        <strain>ATCC 700844 / DSM 13496 / JCM 10307 / IC-167</strain>
    </source>
</reference>
<feature type="chain" id="PRO_1000082619" description="Large ribosomal subunit protein eL39">
    <location>
        <begin position="1"/>
        <end position="52"/>
    </location>
</feature>
<proteinExistence type="inferred from homology"/>
<name>RL39_CALMQ</name>
<protein>
    <recommendedName>
        <fullName evidence="1">Large ribosomal subunit protein eL39</fullName>
    </recommendedName>
    <alternativeName>
        <fullName evidence="2">50S ribosomal protein L39e</fullName>
    </alternativeName>
</protein>